<reference key="1">
    <citation type="submission" date="2000-07" db="EMBL/GenBank/DDBJ databases">
        <title>Genetic analysis of the lim operon of Rhodococcus erythropolis DCL14.</title>
        <authorList>
            <person name="Van der Vlugt-Bergmans C.J.B."/>
            <person name="van der Werf M.J."/>
        </authorList>
    </citation>
    <scope>NUCLEOTIDE SEQUENCE [GENOMIC DNA]</scope>
    <source>
        <strain>DCL 14</strain>
    </source>
</reference>
<reference key="2">
    <citation type="journal article" date="1999" name="Appl. Environ. Microbiol.">
        <title>Rhodococcus erythropolis DCL14 contains a novel degradation pathway for limonene.</title>
        <authorList>
            <person name="van der Werf M.J."/>
            <person name="Swarts H.J."/>
            <person name="de Bont J.A.M."/>
        </authorList>
    </citation>
    <scope>CHARACTERIZATION</scope>
</reference>
<accession>Q9EUT9</accession>
<gene>
    <name type="primary">limB</name>
</gene>
<organism>
    <name type="scientific">Rhodococcus erythropolis</name>
    <name type="common">Arthrobacter picolinophilus</name>
    <dbReference type="NCBI Taxonomy" id="1833"/>
    <lineage>
        <taxon>Bacteria</taxon>
        <taxon>Bacillati</taxon>
        <taxon>Actinomycetota</taxon>
        <taxon>Actinomycetes</taxon>
        <taxon>Mycobacteriales</taxon>
        <taxon>Nocardiaceae</taxon>
        <taxon>Rhodococcus</taxon>
        <taxon>Rhodococcus erythropolis group</taxon>
    </lineage>
</organism>
<keyword id="KW-0274">FAD</keyword>
<keyword id="KW-0285">Flavoprotein</keyword>
<keyword id="KW-0503">Monooxygenase</keyword>
<keyword id="KW-0520">NAD</keyword>
<keyword id="KW-0521">NADP</keyword>
<keyword id="KW-0560">Oxidoreductase</keyword>
<sequence length="387" mass="42371">MTDDFGRVDFGAFLAPWHRADSDANFAIHQDLELVEHLDRLGFAEFWLGEHHSGGVEIVASPEMFMAAAAQRTQRIKLGLGVVSLPYHHPFLVADRLVLLDHLSRGRMIFGAGPGQLADDAKMLGIDPIDSRRKMEEAFDVIHRLLAGETVTQKTDWFTCQDAYLHVAPYSNIQKAVTATVSPTGPKLAGKYGSGILSLAATNPVGVEKLAEHWKIAEDIAAENGQTVDRADWRLSGIMHVAETEEQARADVRHGLLYLMNYLSNITPGFAAAPDVDSLIDGINDAGLAVIGTPEMAVTQIRRLQEKSGGFGKFLVLHGEWASTTAALHSFELIAQQVAPHFNGDLGPRLRGYNQTMNSNRSAADITQAAQEEAQKRFEAERAIRTN</sequence>
<proteinExistence type="evidence at protein level"/>
<dbReference type="EC" id="1.14.13.107"/>
<dbReference type="EMBL" id="AJ272366">
    <property type="protein sequence ID" value="CAC20855.1"/>
    <property type="molecule type" value="Genomic_DNA"/>
</dbReference>
<dbReference type="SMR" id="Q9EUT9"/>
<dbReference type="KEGG" id="ag:CAC20855"/>
<dbReference type="BioCyc" id="MetaCyc:MONOMER-13976"/>
<dbReference type="BRENDA" id="1.14.13.107">
    <property type="organism ID" value="5389"/>
</dbReference>
<dbReference type="UniPathway" id="UPA00987">
    <property type="reaction ID" value="UER00864"/>
</dbReference>
<dbReference type="GO" id="GO:0005829">
    <property type="term" value="C:cytosol"/>
    <property type="evidence" value="ECO:0007669"/>
    <property type="project" value="TreeGrafter"/>
</dbReference>
<dbReference type="GO" id="GO:0052601">
    <property type="term" value="F:limonene 1,2-monooxygenase activity"/>
    <property type="evidence" value="ECO:0007669"/>
    <property type="project" value="UniProtKB-EC"/>
</dbReference>
<dbReference type="Gene3D" id="3.20.20.30">
    <property type="entry name" value="Luciferase-like domain"/>
    <property type="match status" value="1"/>
</dbReference>
<dbReference type="InterPro" id="IPR050766">
    <property type="entry name" value="Bact_Lucif_Oxidored"/>
</dbReference>
<dbReference type="InterPro" id="IPR011251">
    <property type="entry name" value="Luciferase-like_dom"/>
</dbReference>
<dbReference type="InterPro" id="IPR036661">
    <property type="entry name" value="Luciferase-like_sf"/>
</dbReference>
<dbReference type="PANTHER" id="PTHR30137:SF16">
    <property type="entry name" value="BLL0895 PROTEIN"/>
    <property type="match status" value="1"/>
</dbReference>
<dbReference type="PANTHER" id="PTHR30137">
    <property type="entry name" value="LUCIFERASE-LIKE MONOOXYGENASE"/>
    <property type="match status" value="1"/>
</dbReference>
<dbReference type="Pfam" id="PF00296">
    <property type="entry name" value="Bac_luciferase"/>
    <property type="match status" value="1"/>
</dbReference>
<dbReference type="SUPFAM" id="SSF51679">
    <property type="entry name" value="Bacterial luciferase-like"/>
    <property type="match status" value="1"/>
</dbReference>
<evidence type="ECO:0000305" key="1"/>
<feature type="chain" id="PRO_0000220184" description="Limonene 1,2-monooxygenase">
    <location>
        <begin position="1"/>
        <end position="387"/>
    </location>
</feature>
<name>LIMB_RHOER</name>
<comment type="function">
    <text>Acts on both enantiomers of limonene by their NAD-dependent epoxidation at the 1,2 double bond forming limonene-1,2-epoxide.</text>
</comment>
<comment type="catalytic activity">
    <reaction>
        <text>(4S)-limonene + NADPH + O2 + H(+) = limonene 1,2-epoxide + NADP(+) + H2O</text>
        <dbReference type="Rhea" id="RHEA:26085"/>
        <dbReference type="ChEBI" id="CHEBI:15377"/>
        <dbReference type="ChEBI" id="CHEBI:15378"/>
        <dbReference type="ChEBI" id="CHEBI:15379"/>
        <dbReference type="ChEBI" id="CHEBI:15383"/>
        <dbReference type="ChEBI" id="CHEBI:16431"/>
        <dbReference type="ChEBI" id="CHEBI:57783"/>
        <dbReference type="ChEBI" id="CHEBI:58349"/>
        <dbReference type="EC" id="1.14.13.107"/>
    </reaction>
</comment>
<comment type="catalytic activity">
    <reaction>
        <text>(4S)-limonene + NADH + O2 + H(+) = limonene 1,2-epoxide + NAD(+) + H2O</text>
        <dbReference type="Rhea" id="RHEA:26089"/>
        <dbReference type="ChEBI" id="CHEBI:15377"/>
        <dbReference type="ChEBI" id="CHEBI:15378"/>
        <dbReference type="ChEBI" id="CHEBI:15379"/>
        <dbReference type="ChEBI" id="CHEBI:15383"/>
        <dbReference type="ChEBI" id="CHEBI:16431"/>
        <dbReference type="ChEBI" id="CHEBI:57540"/>
        <dbReference type="ChEBI" id="CHEBI:57945"/>
        <dbReference type="EC" id="1.14.13.107"/>
    </reaction>
</comment>
<comment type="catalytic activity">
    <reaction>
        <text>(4R)-limonene + NADH + O2 + H(+) = limonene 1,2-epoxide + NAD(+) + H2O</text>
        <dbReference type="Rhea" id="RHEA:26093"/>
        <dbReference type="ChEBI" id="CHEBI:15377"/>
        <dbReference type="ChEBI" id="CHEBI:15378"/>
        <dbReference type="ChEBI" id="CHEBI:15379"/>
        <dbReference type="ChEBI" id="CHEBI:15382"/>
        <dbReference type="ChEBI" id="CHEBI:16431"/>
        <dbReference type="ChEBI" id="CHEBI:57540"/>
        <dbReference type="ChEBI" id="CHEBI:57945"/>
        <dbReference type="EC" id="1.14.13.107"/>
    </reaction>
</comment>
<comment type="catalytic activity">
    <reaction>
        <text>(4R)-limonene + NADPH + O2 + H(+) = limonene 1,2-epoxide + NADP(+) + H2O</text>
        <dbReference type="Rhea" id="RHEA:26097"/>
        <dbReference type="ChEBI" id="CHEBI:15377"/>
        <dbReference type="ChEBI" id="CHEBI:15378"/>
        <dbReference type="ChEBI" id="CHEBI:15379"/>
        <dbReference type="ChEBI" id="CHEBI:15382"/>
        <dbReference type="ChEBI" id="CHEBI:16431"/>
        <dbReference type="ChEBI" id="CHEBI:57783"/>
        <dbReference type="ChEBI" id="CHEBI:58349"/>
        <dbReference type="EC" id="1.14.13.107"/>
    </reaction>
</comment>
<comment type="cofactor">
    <cofactor>
        <name>FAD</name>
        <dbReference type="ChEBI" id="CHEBI:57692"/>
    </cofactor>
</comment>
<comment type="pathway">
    <text>Terpene metabolism; (4R)-limonene degradation; (1S,4R)-1-hydroxylimonen-2-one from (4R)-limonene: step 1/3.</text>
</comment>
<comment type="similarity">
    <text evidence="1">Belongs to the bacterial luciferase oxidoreductase family.</text>
</comment>
<protein>
    <recommendedName>
        <fullName>Limonene 1,2-monooxygenase</fullName>
        <ecNumber>1.14.13.107</ecNumber>
    </recommendedName>
</protein>